<dbReference type="EMBL" id="AAFI02000185">
    <property type="protein sequence ID" value="EAL61532.1"/>
    <property type="molecule type" value="Genomic_DNA"/>
</dbReference>
<dbReference type="RefSeq" id="XP_629954.1">
    <property type="nucleotide sequence ID" value="XM_629952.1"/>
</dbReference>
<dbReference type="SMR" id="Q54E33"/>
<dbReference type="FunCoup" id="Q54E33">
    <property type="interactions" value="28"/>
</dbReference>
<dbReference type="STRING" id="44689.Q54E33"/>
<dbReference type="PaxDb" id="44689-DDB0267167"/>
<dbReference type="EnsemblProtists" id="EAL61532">
    <property type="protein sequence ID" value="EAL61532"/>
    <property type="gene ID" value="DDB_G0291822"/>
</dbReference>
<dbReference type="GeneID" id="8628360"/>
<dbReference type="KEGG" id="ddi:DDB_G0291822"/>
<dbReference type="dictyBase" id="DDB_G0291822">
    <property type="gene designation" value="wdr92"/>
</dbReference>
<dbReference type="VEuPathDB" id="AmoebaDB:DDB_G0291822"/>
<dbReference type="eggNOG" id="ENOG502QRKB">
    <property type="taxonomic scope" value="Eukaryota"/>
</dbReference>
<dbReference type="HOGENOM" id="CLU_062543_0_0_1"/>
<dbReference type="InParanoid" id="Q54E33"/>
<dbReference type="OMA" id="CLWKYNY"/>
<dbReference type="PhylomeDB" id="Q54E33"/>
<dbReference type="PRO" id="PR:Q54E33"/>
<dbReference type="Proteomes" id="UP000002195">
    <property type="component" value="Chromosome 6"/>
</dbReference>
<dbReference type="GO" id="GO:0120293">
    <property type="term" value="C:dynein axonemal particle"/>
    <property type="evidence" value="ECO:0000250"/>
    <property type="project" value="UniProtKB"/>
</dbReference>
<dbReference type="GO" id="GO:0043130">
    <property type="term" value="F:ubiquitin binding"/>
    <property type="evidence" value="ECO:0000318"/>
    <property type="project" value="GO_Central"/>
</dbReference>
<dbReference type="FunFam" id="2.130.10.10:FF:002620">
    <property type="entry name" value="WD repeat-containing protein 92 homolog"/>
    <property type="match status" value="1"/>
</dbReference>
<dbReference type="Gene3D" id="2.130.10.10">
    <property type="entry name" value="YVTN repeat-like/Quinoprotein amine dehydrogenase"/>
    <property type="match status" value="1"/>
</dbReference>
<dbReference type="InterPro" id="IPR015943">
    <property type="entry name" value="WD40/YVTN_repeat-like_dom_sf"/>
</dbReference>
<dbReference type="InterPro" id="IPR036322">
    <property type="entry name" value="WD40_repeat_dom_sf"/>
</dbReference>
<dbReference type="InterPro" id="IPR001680">
    <property type="entry name" value="WD40_rpt"/>
</dbReference>
<dbReference type="PANTHER" id="PTHR10971">
    <property type="entry name" value="MRNA EXPORT FACTOR AND BUB3"/>
    <property type="match status" value="1"/>
</dbReference>
<dbReference type="Pfam" id="PF00400">
    <property type="entry name" value="WD40"/>
    <property type="match status" value="1"/>
</dbReference>
<dbReference type="SMART" id="SM00320">
    <property type="entry name" value="WD40"/>
    <property type="match status" value="3"/>
</dbReference>
<dbReference type="SUPFAM" id="SSF50978">
    <property type="entry name" value="WD40 repeat-like"/>
    <property type="match status" value="1"/>
</dbReference>
<organism>
    <name type="scientific">Dictyostelium discoideum</name>
    <name type="common">Social amoeba</name>
    <dbReference type="NCBI Taxonomy" id="44689"/>
    <lineage>
        <taxon>Eukaryota</taxon>
        <taxon>Amoebozoa</taxon>
        <taxon>Evosea</taxon>
        <taxon>Eumycetozoa</taxon>
        <taxon>Dictyostelia</taxon>
        <taxon>Dictyosteliales</taxon>
        <taxon>Dictyosteliaceae</taxon>
        <taxon>Dictyostelium</taxon>
    </lineage>
</organism>
<evidence type="ECO:0000250" key="1">
    <source>
        <dbReference type="UniProtKB" id="A8J3F6"/>
    </source>
</evidence>
<evidence type="ECO:0000250" key="2">
    <source>
        <dbReference type="UniProtKB" id="Q96MX6"/>
    </source>
</evidence>
<evidence type="ECO:0000305" key="3"/>
<gene>
    <name type="primary">dnaaf10</name>
    <name type="synonym">wdr92</name>
    <name type="ORF">DDB_G0291822</name>
</gene>
<sequence length="357" mass="39692">MSALGESNNKQNGKEILHNYVTKKLTSQPYSCQWIPTSCSVVTVGKKTSGGISKGDIKIHQLEFDDTSGDPKLNLVYENEFTNPFRCLSFFKQANQLQQQDNRKFITGDFNGQISEWDSDICDIPIWGVKGAHQGSISAIDAYADNLVVCGGKDGTIKVYDTRIKPNSANDNNGNNSSPISTFEQTNKSNCWSICTNDNNIIAGFENGDLNIYNLKTNSIQSTTKLNGGICSIDSNDRSNILNQFLITTNKSFISIASFNNNNNNNIEFKDYDINKEPNQTIWSGIYSPWNKKDNENIFTIAQGDGSVSMYRDDCKLIDKVLVSDLPILSLDYSKDRKGLLCCISLKKQLSILISPC</sequence>
<reference key="1">
    <citation type="journal article" date="2005" name="Nature">
        <title>The genome of the social amoeba Dictyostelium discoideum.</title>
        <authorList>
            <person name="Eichinger L."/>
            <person name="Pachebat J.A."/>
            <person name="Gloeckner G."/>
            <person name="Rajandream M.A."/>
            <person name="Sucgang R."/>
            <person name="Berriman M."/>
            <person name="Song J."/>
            <person name="Olsen R."/>
            <person name="Szafranski K."/>
            <person name="Xu Q."/>
            <person name="Tunggal B."/>
            <person name="Kummerfeld S."/>
            <person name="Madera M."/>
            <person name="Konfortov B.A."/>
            <person name="Rivero F."/>
            <person name="Bankier A.T."/>
            <person name="Lehmann R."/>
            <person name="Hamlin N."/>
            <person name="Davies R."/>
            <person name="Gaudet P."/>
            <person name="Fey P."/>
            <person name="Pilcher K."/>
            <person name="Chen G."/>
            <person name="Saunders D."/>
            <person name="Sodergren E.J."/>
            <person name="Davis P."/>
            <person name="Kerhornou A."/>
            <person name="Nie X."/>
            <person name="Hall N."/>
            <person name="Anjard C."/>
            <person name="Hemphill L."/>
            <person name="Bason N."/>
            <person name="Farbrother P."/>
            <person name="Desany B."/>
            <person name="Just E."/>
            <person name="Morio T."/>
            <person name="Rost R."/>
            <person name="Churcher C.M."/>
            <person name="Cooper J."/>
            <person name="Haydock S."/>
            <person name="van Driessche N."/>
            <person name="Cronin A."/>
            <person name="Goodhead I."/>
            <person name="Muzny D.M."/>
            <person name="Mourier T."/>
            <person name="Pain A."/>
            <person name="Lu M."/>
            <person name="Harper D."/>
            <person name="Lindsay R."/>
            <person name="Hauser H."/>
            <person name="James K.D."/>
            <person name="Quiles M."/>
            <person name="Madan Babu M."/>
            <person name="Saito T."/>
            <person name="Buchrieser C."/>
            <person name="Wardroper A."/>
            <person name="Felder M."/>
            <person name="Thangavelu M."/>
            <person name="Johnson D."/>
            <person name="Knights A."/>
            <person name="Loulseged H."/>
            <person name="Mungall K.L."/>
            <person name="Oliver K."/>
            <person name="Price C."/>
            <person name="Quail M.A."/>
            <person name="Urushihara H."/>
            <person name="Hernandez J."/>
            <person name="Rabbinowitsch E."/>
            <person name="Steffen D."/>
            <person name="Sanders M."/>
            <person name="Ma J."/>
            <person name="Kohara Y."/>
            <person name="Sharp S."/>
            <person name="Simmonds M.N."/>
            <person name="Spiegler S."/>
            <person name="Tivey A."/>
            <person name="Sugano S."/>
            <person name="White B."/>
            <person name="Walker D."/>
            <person name="Woodward J.R."/>
            <person name="Winckler T."/>
            <person name="Tanaka Y."/>
            <person name="Shaulsky G."/>
            <person name="Schleicher M."/>
            <person name="Weinstock G.M."/>
            <person name="Rosenthal A."/>
            <person name="Cox E.C."/>
            <person name="Chisholm R.L."/>
            <person name="Gibbs R.A."/>
            <person name="Loomis W.F."/>
            <person name="Platzer M."/>
            <person name="Kay R.R."/>
            <person name="Williams J.G."/>
            <person name="Dear P.H."/>
            <person name="Noegel A.A."/>
            <person name="Barrell B.G."/>
            <person name="Kuspa A."/>
        </authorList>
    </citation>
    <scope>NUCLEOTIDE SEQUENCE [LARGE SCALE GENOMIC DNA]</scope>
    <source>
        <strain>AX4</strain>
    </source>
</reference>
<accession>Q54E33</accession>
<comment type="function">
    <text evidence="1">Key assembly factor specifically required for the stability of axonemal dynein heavy chains in cytoplasm.</text>
</comment>
<comment type="subunit">
    <text evidence="1 2">Interacts with PIH1D1; the interaction associates DNAAF10 with the R2TP complex (By similarity). Interacts with several dynein axonemal assembly factors (By similarity).</text>
</comment>
<comment type="subcellular location">
    <subcellularLocation>
        <location evidence="1">Dynein axonemal particle</location>
    </subcellularLocation>
</comment>
<proteinExistence type="inferred from homology"/>
<keyword id="KW-0963">Cytoplasm</keyword>
<keyword id="KW-1185">Reference proteome</keyword>
<keyword id="KW-0677">Repeat</keyword>
<keyword id="KW-0853">WD repeat</keyword>
<feature type="chain" id="PRO_0000328014" description="Dynein axonemal assembly factor 10">
    <location>
        <begin position="1"/>
        <end position="357"/>
    </location>
</feature>
<feature type="repeat" description="WD 1">
    <location>
        <begin position="80"/>
        <end position="127"/>
    </location>
</feature>
<feature type="repeat" description="WD 2">
    <location>
        <begin position="132"/>
        <end position="170"/>
    </location>
</feature>
<feature type="repeat" description="WD 3">
    <location>
        <begin position="184"/>
        <end position="223"/>
    </location>
</feature>
<feature type="repeat" description="WD 4">
    <location>
        <begin position="277"/>
        <end position="321"/>
    </location>
</feature>
<name>DAA10_DICDI</name>
<protein>
    <recommendedName>
        <fullName evidence="3">Dynein axonemal assembly factor 10</fullName>
    </recommendedName>
    <alternativeName>
        <fullName>WD repeat-containing protein 92 homolog</fullName>
    </alternativeName>
</protein>